<proteinExistence type="inferred from homology"/>
<organism>
    <name type="scientific">Acidovorax ebreus (strain TPSY)</name>
    <name type="common">Diaphorobacter sp. (strain TPSY)</name>
    <dbReference type="NCBI Taxonomy" id="535289"/>
    <lineage>
        <taxon>Bacteria</taxon>
        <taxon>Pseudomonadati</taxon>
        <taxon>Pseudomonadota</taxon>
        <taxon>Betaproteobacteria</taxon>
        <taxon>Burkholderiales</taxon>
        <taxon>Comamonadaceae</taxon>
        <taxon>Diaphorobacter</taxon>
    </lineage>
</organism>
<protein>
    <recommendedName>
        <fullName evidence="1">Phosphomethylpyrimidine synthase</fullName>
        <ecNumber evidence="1">4.1.99.17</ecNumber>
    </recommendedName>
    <alternativeName>
        <fullName evidence="1">Hydroxymethylpyrimidine phosphate synthase</fullName>
        <shortName evidence="1">HMP-P synthase</shortName>
        <shortName evidence="1">HMP-phosphate synthase</shortName>
        <shortName evidence="1">HMPP synthase</shortName>
    </alternativeName>
    <alternativeName>
        <fullName evidence="1">Thiamine biosynthesis protein ThiC</fullName>
    </alternativeName>
</protein>
<evidence type="ECO:0000255" key="1">
    <source>
        <dbReference type="HAMAP-Rule" id="MF_00089"/>
    </source>
</evidence>
<keyword id="KW-0004">4Fe-4S</keyword>
<keyword id="KW-0408">Iron</keyword>
<keyword id="KW-0411">Iron-sulfur</keyword>
<keyword id="KW-0456">Lyase</keyword>
<keyword id="KW-0479">Metal-binding</keyword>
<keyword id="KW-1185">Reference proteome</keyword>
<keyword id="KW-0949">S-adenosyl-L-methionine</keyword>
<keyword id="KW-0784">Thiamine biosynthesis</keyword>
<keyword id="KW-0862">Zinc</keyword>
<gene>
    <name evidence="1" type="primary">thiC</name>
    <name type="ordered locus">Dtpsy_2971</name>
</gene>
<sequence length="614" mass="67909">MNAPDKFASLLALTREPFPASTKSYLAGSQPGLRVPVRDIQLTNGEVVSVYDTSGPYTDPAVQIDVRKGLASVRGEWIAARGDTEGYEGRVRKALDDGQKAEDGDRLAQLRAEAAALQRQPLRARSGANVTQMHYAKKGIVTPEMEYVALRENGRREWMQQYMQDAAREQRLAGNPLGASIPKIITPEFVRDEVARGRAIIPANINHPEVEPMAIGRNFKVKINANIGNSAVTSSIEEEVEKLVWAIRWGADNVMDLSTGKNIHTTRDWIVRNSPVPIGTVPIYQALEKVGGIAEDLTWEIFRDTLIEQAEQGVDYFTIHAGVRLAYIQLTAARRTGIVSRGGSIMAKWCMAHHKESFLYTHFEDICDIMKAYDVAFSLGDGLRPGCASDANDEAQFAELHTLGELTQIAWKHDVQTMIEGPGHVPMHMIQANMTEQLKTCHEAPFYTLGPLTIDIAPGYDHIASAIGAAMIGWMGTAMLCYVTPKEHLGLPDRDDVKQGIIAYKIAAHAADVAKGHPGARARDDALSQARFDFRWQDQFNLGLDPDTAKEYHDETLPKDSAKVAHFCSMCGPKFCSMKITQEVREFAQQGLQSKAEEFNRTGGELYVPIHRAD</sequence>
<feature type="chain" id="PRO_1000118508" description="Phosphomethylpyrimidine synthase">
    <location>
        <begin position="1"/>
        <end position="614"/>
    </location>
</feature>
<feature type="binding site" evidence="1">
    <location>
        <position position="226"/>
    </location>
    <ligand>
        <name>substrate</name>
    </ligand>
</feature>
<feature type="binding site" evidence="1">
    <location>
        <position position="255"/>
    </location>
    <ligand>
        <name>substrate</name>
    </ligand>
</feature>
<feature type="binding site" evidence="1">
    <location>
        <position position="284"/>
    </location>
    <ligand>
        <name>substrate</name>
    </ligand>
</feature>
<feature type="binding site" evidence="1">
    <location>
        <position position="320"/>
    </location>
    <ligand>
        <name>substrate</name>
    </ligand>
</feature>
<feature type="binding site" evidence="1">
    <location>
        <begin position="340"/>
        <end position="342"/>
    </location>
    <ligand>
        <name>substrate</name>
    </ligand>
</feature>
<feature type="binding site" evidence="1">
    <location>
        <begin position="381"/>
        <end position="384"/>
    </location>
    <ligand>
        <name>substrate</name>
    </ligand>
</feature>
<feature type="binding site" evidence="1">
    <location>
        <position position="420"/>
    </location>
    <ligand>
        <name>substrate</name>
    </ligand>
</feature>
<feature type="binding site" evidence="1">
    <location>
        <position position="424"/>
    </location>
    <ligand>
        <name>Zn(2+)</name>
        <dbReference type="ChEBI" id="CHEBI:29105"/>
    </ligand>
</feature>
<feature type="binding site" evidence="1">
    <location>
        <position position="447"/>
    </location>
    <ligand>
        <name>substrate</name>
    </ligand>
</feature>
<feature type="binding site" evidence="1">
    <location>
        <position position="488"/>
    </location>
    <ligand>
        <name>Zn(2+)</name>
        <dbReference type="ChEBI" id="CHEBI:29105"/>
    </ligand>
</feature>
<feature type="binding site" evidence="1">
    <location>
        <position position="568"/>
    </location>
    <ligand>
        <name>[4Fe-4S] cluster</name>
        <dbReference type="ChEBI" id="CHEBI:49883"/>
        <note>4Fe-4S-S-AdoMet</note>
    </ligand>
</feature>
<feature type="binding site" evidence="1">
    <location>
        <position position="571"/>
    </location>
    <ligand>
        <name>[4Fe-4S] cluster</name>
        <dbReference type="ChEBI" id="CHEBI:49883"/>
        <note>4Fe-4S-S-AdoMet</note>
    </ligand>
</feature>
<feature type="binding site" evidence="1">
    <location>
        <position position="576"/>
    </location>
    <ligand>
        <name>[4Fe-4S] cluster</name>
        <dbReference type="ChEBI" id="CHEBI:49883"/>
        <note>4Fe-4S-S-AdoMet</note>
    </ligand>
</feature>
<accession>B9MFQ3</accession>
<name>THIC_ACIET</name>
<reference key="1">
    <citation type="submission" date="2009-01" db="EMBL/GenBank/DDBJ databases">
        <title>Complete sequence of Diaphorobacter sp. TPSY.</title>
        <authorList>
            <consortium name="US DOE Joint Genome Institute"/>
            <person name="Lucas S."/>
            <person name="Copeland A."/>
            <person name="Lapidus A."/>
            <person name="Glavina del Rio T."/>
            <person name="Tice H."/>
            <person name="Bruce D."/>
            <person name="Goodwin L."/>
            <person name="Pitluck S."/>
            <person name="Chertkov O."/>
            <person name="Brettin T."/>
            <person name="Detter J.C."/>
            <person name="Han C."/>
            <person name="Larimer F."/>
            <person name="Land M."/>
            <person name="Hauser L."/>
            <person name="Kyrpides N."/>
            <person name="Mikhailova N."/>
            <person name="Coates J.D."/>
        </authorList>
    </citation>
    <scope>NUCLEOTIDE SEQUENCE [LARGE SCALE GENOMIC DNA]</scope>
    <source>
        <strain>TPSY</strain>
    </source>
</reference>
<comment type="function">
    <text evidence="1">Catalyzes the synthesis of the hydroxymethylpyrimidine phosphate (HMP-P) moiety of thiamine from aminoimidazole ribotide (AIR) in a radical S-adenosyl-L-methionine (SAM)-dependent reaction.</text>
</comment>
<comment type="catalytic activity">
    <reaction evidence="1">
        <text>5-amino-1-(5-phospho-beta-D-ribosyl)imidazole + S-adenosyl-L-methionine = 4-amino-2-methyl-5-(phosphooxymethyl)pyrimidine + CO + 5'-deoxyadenosine + formate + L-methionine + 3 H(+)</text>
        <dbReference type="Rhea" id="RHEA:24840"/>
        <dbReference type="ChEBI" id="CHEBI:15378"/>
        <dbReference type="ChEBI" id="CHEBI:15740"/>
        <dbReference type="ChEBI" id="CHEBI:17245"/>
        <dbReference type="ChEBI" id="CHEBI:17319"/>
        <dbReference type="ChEBI" id="CHEBI:57844"/>
        <dbReference type="ChEBI" id="CHEBI:58354"/>
        <dbReference type="ChEBI" id="CHEBI:59789"/>
        <dbReference type="ChEBI" id="CHEBI:137981"/>
        <dbReference type="EC" id="4.1.99.17"/>
    </reaction>
</comment>
<comment type="cofactor">
    <cofactor evidence="1">
        <name>[4Fe-4S] cluster</name>
        <dbReference type="ChEBI" id="CHEBI:49883"/>
    </cofactor>
    <text evidence="1">Binds 1 [4Fe-4S] cluster per subunit. The cluster is coordinated with 3 cysteines and an exchangeable S-adenosyl-L-methionine.</text>
</comment>
<comment type="pathway">
    <text evidence="1">Cofactor biosynthesis; thiamine diphosphate biosynthesis.</text>
</comment>
<comment type="subunit">
    <text evidence="1">Homodimer.</text>
</comment>
<comment type="similarity">
    <text evidence="1">Belongs to the ThiC family.</text>
</comment>
<dbReference type="EC" id="4.1.99.17" evidence="1"/>
<dbReference type="EMBL" id="CP001392">
    <property type="protein sequence ID" value="ACM34404.1"/>
    <property type="molecule type" value="Genomic_DNA"/>
</dbReference>
<dbReference type="RefSeq" id="WP_015914256.1">
    <property type="nucleotide sequence ID" value="NC_011992.1"/>
</dbReference>
<dbReference type="SMR" id="B9MFQ3"/>
<dbReference type="KEGG" id="dia:Dtpsy_2971"/>
<dbReference type="eggNOG" id="COG0422">
    <property type="taxonomic scope" value="Bacteria"/>
</dbReference>
<dbReference type="HOGENOM" id="CLU_013181_2_1_4"/>
<dbReference type="UniPathway" id="UPA00060"/>
<dbReference type="Proteomes" id="UP000000450">
    <property type="component" value="Chromosome"/>
</dbReference>
<dbReference type="GO" id="GO:0005829">
    <property type="term" value="C:cytosol"/>
    <property type="evidence" value="ECO:0007669"/>
    <property type="project" value="TreeGrafter"/>
</dbReference>
<dbReference type="GO" id="GO:0051539">
    <property type="term" value="F:4 iron, 4 sulfur cluster binding"/>
    <property type="evidence" value="ECO:0007669"/>
    <property type="project" value="UniProtKB-KW"/>
</dbReference>
<dbReference type="GO" id="GO:0016830">
    <property type="term" value="F:carbon-carbon lyase activity"/>
    <property type="evidence" value="ECO:0007669"/>
    <property type="project" value="InterPro"/>
</dbReference>
<dbReference type="GO" id="GO:0008270">
    <property type="term" value="F:zinc ion binding"/>
    <property type="evidence" value="ECO:0007669"/>
    <property type="project" value="UniProtKB-UniRule"/>
</dbReference>
<dbReference type="GO" id="GO:0009228">
    <property type="term" value="P:thiamine biosynthetic process"/>
    <property type="evidence" value="ECO:0007669"/>
    <property type="project" value="UniProtKB-KW"/>
</dbReference>
<dbReference type="GO" id="GO:0009229">
    <property type="term" value="P:thiamine diphosphate biosynthetic process"/>
    <property type="evidence" value="ECO:0007669"/>
    <property type="project" value="UniProtKB-UniRule"/>
</dbReference>
<dbReference type="FunFam" id="3.20.20.540:FF:000001">
    <property type="entry name" value="Phosphomethylpyrimidine synthase"/>
    <property type="match status" value="1"/>
</dbReference>
<dbReference type="Gene3D" id="6.10.250.620">
    <property type="match status" value="1"/>
</dbReference>
<dbReference type="Gene3D" id="3.20.20.540">
    <property type="entry name" value="Radical SAM ThiC family, central domain"/>
    <property type="match status" value="1"/>
</dbReference>
<dbReference type="HAMAP" id="MF_00089">
    <property type="entry name" value="ThiC"/>
    <property type="match status" value="1"/>
</dbReference>
<dbReference type="InterPro" id="IPR037509">
    <property type="entry name" value="ThiC"/>
</dbReference>
<dbReference type="InterPro" id="IPR025747">
    <property type="entry name" value="ThiC-associated_dom"/>
</dbReference>
<dbReference type="InterPro" id="IPR038521">
    <property type="entry name" value="ThiC/Bza_core_dom"/>
</dbReference>
<dbReference type="InterPro" id="IPR002817">
    <property type="entry name" value="ThiC/BzaA/B"/>
</dbReference>
<dbReference type="NCBIfam" id="NF006763">
    <property type="entry name" value="PRK09284.1"/>
    <property type="match status" value="1"/>
</dbReference>
<dbReference type="NCBIfam" id="NF009895">
    <property type="entry name" value="PRK13352.1"/>
    <property type="match status" value="1"/>
</dbReference>
<dbReference type="NCBIfam" id="TIGR00190">
    <property type="entry name" value="thiC"/>
    <property type="match status" value="1"/>
</dbReference>
<dbReference type="PANTHER" id="PTHR30557:SF1">
    <property type="entry name" value="PHOSPHOMETHYLPYRIMIDINE SYNTHASE, CHLOROPLASTIC"/>
    <property type="match status" value="1"/>
</dbReference>
<dbReference type="PANTHER" id="PTHR30557">
    <property type="entry name" value="THIAMINE BIOSYNTHESIS PROTEIN THIC"/>
    <property type="match status" value="1"/>
</dbReference>
<dbReference type="Pfam" id="PF13667">
    <property type="entry name" value="ThiC-associated"/>
    <property type="match status" value="1"/>
</dbReference>
<dbReference type="Pfam" id="PF01964">
    <property type="entry name" value="ThiC_Rad_SAM"/>
    <property type="match status" value="1"/>
</dbReference>
<dbReference type="SFLD" id="SFLDF00407">
    <property type="entry name" value="phosphomethylpyrimidine_syntha"/>
    <property type="match status" value="1"/>
</dbReference>
<dbReference type="SFLD" id="SFLDG01114">
    <property type="entry name" value="phosphomethylpyrimidine_syntha"/>
    <property type="match status" value="1"/>
</dbReference>
<dbReference type="SFLD" id="SFLDS00113">
    <property type="entry name" value="Radical_SAM_Phosphomethylpyrim"/>
    <property type="match status" value="1"/>
</dbReference>